<organism>
    <name type="scientific">Campylobacter hominis (strain ATCC BAA-381 / DSM 21671 / CCUG 45161 / LMG 19568 / NCTC 13146 / CH001A)</name>
    <dbReference type="NCBI Taxonomy" id="360107"/>
    <lineage>
        <taxon>Bacteria</taxon>
        <taxon>Pseudomonadati</taxon>
        <taxon>Campylobacterota</taxon>
        <taxon>Epsilonproteobacteria</taxon>
        <taxon>Campylobacterales</taxon>
        <taxon>Campylobacteraceae</taxon>
        <taxon>Campylobacter</taxon>
    </lineage>
</organism>
<keyword id="KW-0067">ATP-binding</keyword>
<keyword id="KW-0963">Cytoplasm</keyword>
<keyword id="KW-0324">Glycolysis</keyword>
<keyword id="KW-0418">Kinase</keyword>
<keyword id="KW-0547">Nucleotide-binding</keyword>
<keyword id="KW-1185">Reference proteome</keyword>
<keyword id="KW-0808">Transferase</keyword>
<gene>
    <name evidence="1" type="primary">pgk</name>
    <name type="ordered locus">CHAB381_0778</name>
</gene>
<comment type="catalytic activity">
    <reaction evidence="1">
        <text>(2R)-3-phosphoglycerate + ATP = (2R)-3-phospho-glyceroyl phosphate + ADP</text>
        <dbReference type="Rhea" id="RHEA:14801"/>
        <dbReference type="ChEBI" id="CHEBI:30616"/>
        <dbReference type="ChEBI" id="CHEBI:57604"/>
        <dbReference type="ChEBI" id="CHEBI:58272"/>
        <dbReference type="ChEBI" id="CHEBI:456216"/>
        <dbReference type="EC" id="2.7.2.3"/>
    </reaction>
</comment>
<comment type="pathway">
    <text evidence="1">Carbohydrate degradation; glycolysis; pyruvate from D-glyceraldehyde 3-phosphate: step 2/5.</text>
</comment>
<comment type="subunit">
    <text evidence="1">Monomer.</text>
</comment>
<comment type="subcellular location">
    <subcellularLocation>
        <location evidence="1">Cytoplasm</location>
    </subcellularLocation>
</comment>
<comment type="similarity">
    <text evidence="1">Belongs to the phosphoglycerate kinase family.</text>
</comment>
<proteinExistence type="inferred from homology"/>
<accession>A7I1G1</accession>
<evidence type="ECO:0000255" key="1">
    <source>
        <dbReference type="HAMAP-Rule" id="MF_00145"/>
    </source>
</evidence>
<protein>
    <recommendedName>
        <fullName evidence="1">Phosphoglycerate kinase</fullName>
        <ecNumber evidence="1">2.7.2.3</ecNumber>
    </recommendedName>
</protein>
<name>PGK_CAMHC</name>
<reference key="1">
    <citation type="submission" date="2007-07" db="EMBL/GenBank/DDBJ databases">
        <title>Complete genome sequence of Campylobacter hominis ATCC BAA-381, a commensal isolated from the human gastrointestinal tract.</title>
        <authorList>
            <person name="Fouts D.E."/>
            <person name="Mongodin E.F."/>
            <person name="Puiu D."/>
            <person name="Sebastian Y."/>
            <person name="Miller W.G."/>
            <person name="Mandrell R.E."/>
            <person name="Nelson K.E."/>
        </authorList>
    </citation>
    <scope>NUCLEOTIDE SEQUENCE [LARGE SCALE GENOMIC DNA]</scope>
    <source>
        <strain>ATCC BAA-381 / DSM 21671 / CCUG 45161 / LMG 19568 / NCTC 13146 / CH001A</strain>
    </source>
</reference>
<feature type="chain" id="PRO_1000203324" description="Phosphoglycerate kinase">
    <location>
        <begin position="1"/>
        <end position="405"/>
    </location>
</feature>
<feature type="binding site" evidence="1">
    <location>
        <begin position="23"/>
        <end position="25"/>
    </location>
    <ligand>
        <name>substrate</name>
    </ligand>
</feature>
<feature type="binding site" evidence="1">
    <location>
        <position position="39"/>
    </location>
    <ligand>
        <name>substrate</name>
    </ligand>
</feature>
<feature type="binding site" evidence="1">
    <location>
        <begin position="62"/>
        <end position="65"/>
    </location>
    <ligand>
        <name>substrate</name>
    </ligand>
</feature>
<feature type="binding site" evidence="1">
    <location>
        <position position="121"/>
    </location>
    <ligand>
        <name>substrate</name>
    </ligand>
</feature>
<feature type="binding site" evidence="1">
    <location>
        <position position="154"/>
    </location>
    <ligand>
        <name>substrate</name>
    </ligand>
</feature>
<feature type="binding site" evidence="1">
    <location>
        <position position="207"/>
    </location>
    <ligand>
        <name>ATP</name>
        <dbReference type="ChEBI" id="CHEBI:30616"/>
    </ligand>
</feature>
<feature type="binding site" evidence="1">
    <location>
        <position position="298"/>
    </location>
    <ligand>
        <name>ATP</name>
        <dbReference type="ChEBI" id="CHEBI:30616"/>
    </ligand>
</feature>
<feature type="binding site" evidence="1">
    <location>
        <position position="329"/>
    </location>
    <ligand>
        <name>ATP</name>
        <dbReference type="ChEBI" id="CHEBI:30616"/>
    </ligand>
</feature>
<feature type="binding site" evidence="1">
    <location>
        <begin position="355"/>
        <end position="358"/>
    </location>
    <ligand>
        <name>ATP</name>
        <dbReference type="ChEBI" id="CHEBI:30616"/>
    </ligand>
</feature>
<dbReference type="EC" id="2.7.2.3" evidence="1"/>
<dbReference type="EMBL" id="CP000776">
    <property type="protein sequence ID" value="ABS51963.1"/>
    <property type="molecule type" value="Genomic_DNA"/>
</dbReference>
<dbReference type="RefSeq" id="WP_012108641.1">
    <property type="nucleotide sequence ID" value="NC_009714.1"/>
</dbReference>
<dbReference type="SMR" id="A7I1G1"/>
<dbReference type="STRING" id="360107.CHAB381_0778"/>
<dbReference type="KEGG" id="cha:CHAB381_0778"/>
<dbReference type="eggNOG" id="COG0126">
    <property type="taxonomic scope" value="Bacteria"/>
</dbReference>
<dbReference type="HOGENOM" id="CLU_025427_0_2_7"/>
<dbReference type="OrthoDB" id="9808460at2"/>
<dbReference type="UniPathway" id="UPA00109">
    <property type="reaction ID" value="UER00185"/>
</dbReference>
<dbReference type="Proteomes" id="UP000002407">
    <property type="component" value="Chromosome"/>
</dbReference>
<dbReference type="GO" id="GO:0005829">
    <property type="term" value="C:cytosol"/>
    <property type="evidence" value="ECO:0007669"/>
    <property type="project" value="TreeGrafter"/>
</dbReference>
<dbReference type="GO" id="GO:0043531">
    <property type="term" value="F:ADP binding"/>
    <property type="evidence" value="ECO:0007669"/>
    <property type="project" value="TreeGrafter"/>
</dbReference>
<dbReference type="GO" id="GO:0005524">
    <property type="term" value="F:ATP binding"/>
    <property type="evidence" value="ECO:0007669"/>
    <property type="project" value="UniProtKB-KW"/>
</dbReference>
<dbReference type="GO" id="GO:0004618">
    <property type="term" value="F:phosphoglycerate kinase activity"/>
    <property type="evidence" value="ECO:0007669"/>
    <property type="project" value="UniProtKB-UniRule"/>
</dbReference>
<dbReference type="GO" id="GO:0006094">
    <property type="term" value="P:gluconeogenesis"/>
    <property type="evidence" value="ECO:0007669"/>
    <property type="project" value="TreeGrafter"/>
</dbReference>
<dbReference type="GO" id="GO:0006096">
    <property type="term" value="P:glycolytic process"/>
    <property type="evidence" value="ECO:0007669"/>
    <property type="project" value="UniProtKB-UniRule"/>
</dbReference>
<dbReference type="CDD" id="cd00318">
    <property type="entry name" value="Phosphoglycerate_kinase"/>
    <property type="match status" value="1"/>
</dbReference>
<dbReference type="FunFam" id="3.40.50.1260:FF:000006">
    <property type="entry name" value="Phosphoglycerate kinase"/>
    <property type="match status" value="1"/>
</dbReference>
<dbReference type="FunFam" id="3.40.50.1260:FF:000007">
    <property type="entry name" value="Phosphoglycerate kinase"/>
    <property type="match status" value="1"/>
</dbReference>
<dbReference type="Gene3D" id="3.40.50.1260">
    <property type="entry name" value="Phosphoglycerate kinase, N-terminal domain"/>
    <property type="match status" value="2"/>
</dbReference>
<dbReference type="HAMAP" id="MF_00145">
    <property type="entry name" value="Phosphoglyc_kinase"/>
    <property type="match status" value="1"/>
</dbReference>
<dbReference type="InterPro" id="IPR001576">
    <property type="entry name" value="Phosphoglycerate_kinase"/>
</dbReference>
<dbReference type="InterPro" id="IPR015911">
    <property type="entry name" value="Phosphoglycerate_kinase_CS"/>
</dbReference>
<dbReference type="InterPro" id="IPR015824">
    <property type="entry name" value="Phosphoglycerate_kinase_N"/>
</dbReference>
<dbReference type="InterPro" id="IPR036043">
    <property type="entry name" value="Phosphoglycerate_kinase_sf"/>
</dbReference>
<dbReference type="PANTHER" id="PTHR11406">
    <property type="entry name" value="PHOSPHOGLYCERATE KINASE"/>
    <property type="match status" value="1"/>
</dbReference>
<dbReference type="PANTHER" id="PTHR11406:SF23">
    <property type="entry name" value="PHOSPHOGLYCERATE KINASE 1, CHLOROPLASTIC-RELATED"/>
    <property type="match status" value="1"/>
</dbReference>
<dbReference type="Pfam" id="PF00162">
    <property type="entry name" value="PGK"/>
    <property type="match status" value="1"/>
</dbReference>
<dbReference type="PIRSF" id="PIRSF000724">
    <property type="entry name" value="Pgk"/>
    <property type="match status" value="1"/>
</dbReference>
<dbReference type="PRINTS" id="PR00477">
    <property type="entry name" value="PHGLYCKINASE"/>
</dbReference>
<dbReference type="SUPFAM" id="SSF53748">
    <property type="entry name" value="Phosphoglycerate kinase"/>
    <property type="match status" value="1"/>
</dbReference>
<dbReference type="PROSITE" id="PS00111">
    <property type="entry name" value="PGLYCERATE_KINASE"/>
    <property type="match status" value="1"/>
</dbReference>
<sequence>MGEILSVKDIKFKKGEKVFIRCDFNVPMDEFLNITDDRRIRAAIPTIRYCLDEGCSVILASHLGRPKNGYEAKFSLEPVAKRLARRMNREIKFVNDVIGKEAVEAVKNLKENEVLLLDNLRFEKGETKNDPEFAQKLASYANYYINDAFGVCHRAHASVEAITKFYDNKHKAAGFLLIKEVNFAANLTKRPVRPFVAVAGGSKVSGKLQALKNLLPKVDKLIIGGGMAFTFLKAIGYEIGNSLLEEDLVEEALNILREGKRLGVKIYIPVDAIVAPAISQDSVMKNVTVQEIPAGWMGLDIGPATIALFREALSDAQTIWWNGPMGVFEIDKFARGSLRMSHAIAESNATTVVGGGDTADVVERAGNSDEMTFISTGGGASLELIEGKELPGVRVLTIKNDEMEC</sequence>